<proteinExistence type="inferred from homology"/>
<keyword id="KW-1185">Reference proteome</keyword>
<keyword id="KW-0687">Ribonucleoprotein</keyword>
<keyword id="KW-0689">Ribosomal protein</keyword>
<keyword id="KW-0694">RNA-binding</keyword>
<keyword id="KW-0699">rRNA-binding</keyword>
<comment type="function">
    <text evidence="1">Forms part of the ribosomal stalk, playing a central role in the interaction of the ribosome with GTP-bound translation factors.</text>
</comment>
<comment type="subunit">
    <text evidence="1">Part of the ribosomal stalk of the 50S ribosomal subunit. The N-terminus interacts with L11 and the large rRNA to form the base of the stalk. The C-terminus forms an elongated spine to which L12 dimers bind in a sequential fashion forming a multimeric L10(L12)X complex.</text>
</comment>
<comment type="similarity">
    <text evidence="1">Belongs to the universal ribosomal protein uL10 family.</text>
</comment>
<protein>
    <recommendedName>
        <fullName evidence="1">Large ribosomal subunit protein uL10</fullName>
    </recommendedName>
    <alternativeName>
        <fullName evidence="2">50S ribosomal protein L10</fullName>
    </alternativeName>
</protein>
<gene>
    <name evidence="1" type="primary">rplJ</name>
    <name type="ordered locus">H16_A3499</name>
</gene>
<feature type="chain" id="PRO_1000005568" description="Large ribosomal subunit protein uL10">
    <location>
        <begin position="1"/>
        <end position="173"/>
    </location>
</feature>
<sequence>MPLNIEDKKAVVAEVSAQVAKAQTIVVAEYRGITVGDLTKLRSTARQQGVYLRVLKNTLARRAVEGTPFASLAEQMTGPLIYGISEDAVSSAKVLNDFAKTNDKLVLRAGSYDGKVLDAAAVKALASIPSRDELIAQLLGVMQAPVSGFARLLAALAAKNAEGAPAEAEAAGA</sequence>
<dbReference type="EMBL" id="AM260479">
    <property type="protein sequence ID" value="CAJ94567.1"/>
    <property type="molecule type" value="Genomic_DNA"/>
</dbReference>
<dbReference type="RefSeq" id="WP_010810465.1">
    <property type="nucleotide sequence ID" value="NZ_CP039287.1"/>
</dbReference>
<dbReference type="SMR" id="Q0K604"/>
<dbReference type="STRING" id="381666.H16_A3499"/>
<dbReference type="GeneID" id="34308525"/>
<dbReference type="KEGG" id="reh:H16_A3499"/>
<dbReference type="eggNOG" id="COG0244">
    <property type="taxonomic scope" value="Bacteria"/>
</dbReference>
<dbReference type="HOGENOM" id="CLU_092227_0_0_4"/>
<dbReference type="OrthoDB" id="9808307at2"/>
<dbReference type="Proteomes" id="UP000008210">
    <property type="component" value="Chromosome 1"/>
</dbReference>
<dbReference type="GO" id="GO:0015934">
    <property type="term" value="C:large ribosomal subunit"/>
    <property type="evidence" value="ECO:0007669"/>
    <property type="project" value="InterPro"/>
</dbReference>
<dbReference type="GO" id="GO:0070180">
    <property type="term" value="F:large ribosomal subunit rRNA binding"/>
    <property type="evidence" value="ECO:0007669"/>
    <property type="project" value="UniProtKB-UniRule"/>
</dbReference>
<dbReference type="GO" id="GO:0003735">
    <property type="term" value="F:structural constituent of ribosome"/>
    <property type="evidence" value="ECO:0007669"/>
    <property type="project" value="InterPro"/>
</dbReference>
<dbReference type="GO" id="GO:0006412">
    <property type="term" value="P:translation"/>
    <property type="evidence" value="ECO:0007669"/>
    <property type="project" value="UniProtKB-UniRule"/>
</dbReference>
<dbReference type="CDD" id="cd05797">
    <property type="entry name" value="Ribosomal_L10"/>
    <property type="match status" value="1"/>
</dbReference>
<dbReference type="Gene3D" id="3.30.70.1730">
    <property type="match status" value="1"/>
</dbReference>
<dbReference type="Gene3D" id="6.10.250.290">
    <property type="match status" value="1"/>
</dbReference>
<dbReference type="HAMAP" id="MF_00362">
    <property type="entry name" value="Ribosomal_uL10"/>
    <property type="match status" value="1"/>
</dbReference>
<dbReference type="InterPro" id="IPR001790">
    <property type="entry name" value="Ribosomal_uL10"/>
</dbReference>
<dbReference type="InterPro" id="IPR043141">
    <property type="entry name" value="Ribosomal_uL10-like_sf"/>
</dbReference>
<dbReference type="InterPro" id="IPR022973">
    <property type="entry name" value="Ribosomal_uL10_bac"/>
</dbReference>
<dbReference type="InterPro" id="IPR047865">
    <property type="entry name" value="Ribosomal_uL10_bac_type"/>
</dbReference>
<dbReference type="InterPro" id="IPR002363">
    <property type="entry name" value="Ribosomal_uL10_CS_bac"/>
</dbReference>
<dbReference type="NCBIfam" id="NF000955">
    <property type="entry name" value="PRK00099.1-1"/>
    <property type="match status" value="1"/>
</dbReference>
<dbReference type="PANTHER" id="PTHR11560">
    <property type="entry name" value="39S RIBOSOMAL PROTEIN L10, MITOCHONDRIAL"/>
    <property type="match status" value="1"/>
</dbReference>
<dbReference type="Pfam" id="PF00466">
    <property type="entry name" value="Ribosomal_L10"/>
    <property type="match status" value="1"/>
</dbReference>
<dbReference type="SUPFAM" id="SSF160369">
    <property type="entry name" value="Ribosomal protein L10-like"/>
    <property type="match status" value="1"/>
</dbReference>
<dbReference type="PROSITE" id="PS01109">
    <property type="entry name" value="RIBOSOMAL_L10"/>
    <property type="match status" value="1"/>
</dbReference>
<evidence type="ECO:0000255" key="1">
    <source>
        <dbReference type="HAMAP-Rule" id="MF_00362"/>
    </source>
</evidence>
<evidence type="ECO:0000305" key="2"/>
<name>RL10_CUPNH</name>
<accession>Q0K604</accession>
<reference key="1">
    <citation type="journal article" date="2006" name="Nat. Biotechnol.">
        <title>Genome sequence of the bioplastic-producing 'Knallgas' bacterium Ralstonia eutropha H16.</title>
        <authorList>
            <person name="Pohlmann A."/>
            <person name="Fricke W.F."/>
            <person name="Reinecke F."/>
            <person name="Kusian B."/>
            <person name="Liesegang H."/>
            <person name="Cramm R."/>
            <person name="Eitinger T."/>
            <person name="Ewering C."/>
            <person name="Poetter M."/>
            <person name="Schwartz E."/>
            <person name="Strittmatter A."/>
            <person name="Voss I."/>
            <person name="Gottschalk G."/>
            <person name="Steinbuechel A."/>
            <person name="Friedrich B."/>
            <person name="Bowien B."/>
        </authorList>
    </citation>
    <scope>NUCLEOTIDE SEQUENCE [LARGE SCALE GENOMIC DNA]</scope>
    <source>
        <strain>ATCC 17699 / DSM 428 / KCTC 22496 / NCIMB 10442 / H16 / Stanier 337</strain>
    </source>
</reference>
<organism>
    <name type="scientific">Cupriavidus necator (strain ATCC 17699 / DSM 428 / KCTC 22496 / NCIMB 10442 / H16 / Stanier 337)</name>
    <name type="common">Ralstonia eutropha</name>
    <dbReference type="NCBI Taxonomy" id="381666"/>
    <lineage>
        <taxon>Bacteria</taxon>
        <taxon>Pseudomonadati</taxon>
        <taxon>Pseudomonadota</taxon>
        <taxon>Betaproteobacteria</taxon>
        <taxon>Burkholderiales</taxon>
        <taxon>Burkholderiaceae</taxon>
        <taxon>Cupriavidus</taxon>
    </lineage>
</organism>